<protein>
    <recommendedName>
        <fullName>Uncharacterized methyltransferase PH0819</fullName>
        <ecNumber>2.1.1.-</ecNumber>
    </recommendedName>
</protein>
<keyword id="KW-0004">4Fe-4S</keyword>
<keyword id="KW-0408">Iron</keyword>
<keyword id="KW-0411">Iron-sulfur</keyword>
<keyword id="KW-0479">Metal-binding</keyword>
<keyword id="KW-0489">Methyltransferase</keyword>
<keyword id="KW-0949">S-adenosyl-L-methionine</keyword>
<keyword id="KW-0808">Transferase</keyword>
<sequence length="459" mass="51718">MKVMKILLVLPPTESAIKRVVGTTGPPLGLAYLASMVREEHDVKIIDGLAEDLTFSDIAKIIKKFDPDIVGITATTSAMYDAYTVAKIAKNINENVFVVMGGPHVTFTPELTMRECPCIDAVVRGEGELTFKELVDALSKGRELKGILGLSYKENGKVRNEPPRPLIQNVDEIPIPSYDLLPMDKYKADGVPFGVVMTSRGCPFNCVFCSSSLQFGKRWRGHSVERVIEELSILHYEYGIKEIEFLDDTFTLNKKRAIDISLRIKQEGLDISWTASSRVNTFNEKVAKAMKEGGCHTVYFGIESASPRILEFIGKGITPQQSIDAVKTAKKFGLHALGSFIIGFPDETREEVEATIKFAKKLDIDYAQFTIATPYPGTRLWEYAIANNLLLTMNWRKYTTIDPVMKLKHFTSEQISKLLRKAYISFYLRPKVLIKDIFEHHGFIIKRAIRGLLRVYYQA</sequence>
<organism>
    <name type="scientific">Pyrococcus horikoshii (strain ATCC 700860 / DSM 12428 / JCM 9974 / NBRC 100139 / OT-3)</name>
    <dbReference type="NCBI Taxonomy" id="70601"/>
    <lineage>
        <taxon>Archaea</taxon>
        <taxon>Methanobacteriati</taxon>
        <taxon>Methanobacteriota</taxon>
        <taxon>Thermococci</taxon>
        <taxon>Thermococcales</taxon>
        <taxon>Thermococcaceae</taxon>
        <taxon>Pyrococcus</taxon>
    </lineage>
</organism>
<feature type="chain" id="PRO_0000184778" description="Uncharacterized methyltransferase PH0819">
    <location>
        <begin position="1"/>
        <end position="459"/>
    </location>
</feature>
<feature type="domain" description="B12-binding" evidence="2">
    <location>
        <begin position="13"/>
        <end position="145"/>
    </location>
</feature>
<feature type="domain" description="Radical SAM core" evidence="3">
    <location>
        <begin position="188"/>
        <end position="402"/>
    </location>
</feature>
<feature type="binding site" evidence="1">
    <location>
        <position position="202"/>
    </location>
    <ligand>
        <name>[4Fe-4S] cluster</name>
        <dbReference type="ChEBI" id="CHEBI:49883"/>
        <note>4Fe-4S-S-AdoMet</note>
    </ligand>
</feature>
<feature type="binding site" evidence="1">
    <location>
        <position position="206"/>
    </location>
    <ligand>
        <name>[4Fe-4S] cluster</name>
        <dbReference type="ChEBI" id="CHEBI:49883"/>
        <note>4Fe-4S-S-AdoMet</note>
    </ligand>
</feature>
<feature type="binding site" evidence="1">
    <location>
        <position position="209"/>
    </location>
    <ligand>
        <name>[4Fe-4S] cluster</name>
        <dbReference type="ChEBI" id="CHEBI:49883"/>
        <note>4Fe-4S-S-AdoMet</note>
    </ligand>
</feature>
<accession>O58549</accession>
<dbReference type="EC" id="2.1.1.-"/>
<dbReference type="EMBL" id="BA000001">
    <property type="protein sequence ID" value="BAA29912.1"/>
    <property type="molecule type" value="Genomic_DNA"/>
</dbReference>
<dbReference type="PIR" id="F71131">
    <property type="entry name" value="F71131"/>
</dbReference>
<dbReference type="SMR" id="O58549"/>
<dbReference type="STRING" id="70601.gene:9377769"/>
<dbReference type="EnsemblBacteria" id="BAA29912">
    <property type="protein sequence ID" value="BAA29912"/>
    <property type="gene ID" value="BAA29912"/>
</dbReference>
<dbReference type="KEGG" id="pho:PH0819"/>
<dbReference type="eggNOG" id="arCOG01356">
    <property type="taxonomic scope" value="Archaea"/>
</dbReference>
<dbReference type="OrthoDB" id="2305at2157"/>
<dbReference type="Proteomes" id="UP000000752">
    <property type="component" value="Chromosome"/>
</dbReference>
<dbReference type="GO" id="GO:0051539">
    <property type="term" value="F:4 iron, 4 sulfur cluster binding"/>
    <property type="evidence" value="ECO:0007669"/>
    <property type="project" value="UniProtKB-KW"/>
</dbReference>
<dbReference type="GO" id="GO:0031419">
    <property type="term" value="F:cobalamin binding"/>
    <property type="evidence" value="ECO:0007669"/>
    <property type="project" value="InterPro"/>
</dbReference>
<dbReference type="GO" id="GO:0046872">
    <property type="term" value="F:metal ion binding"/>
    <property type="evidence" value="ECO:0007669"/>
    <property type="project" value="UniProtKB-KW"/>
</dbReference>
<dbReference type="GO" id="GO:0008168">
    <property type="term" value="F:methyltransferase activity"/>
    <property type="evidence" value="ECO:0007669"/>
    <property type="project" value="UniProtKB-KW"/>
</dbReference>
<dbReference type="GO" id="GO:0032259">
    <property type="term" value="P:methylation"/>
    <property type="evidence" value="ECO:0007669"/>
    <property type="project" value="UniProtKB-KW"/>
</dbReference>
<dbReference type="CDD" id="cd01335">
    <property type="entry name" value="Radical_SAM"/>
    <property type="match status" value="1"/>
</dbReference>
<dbReference type="CDD" id="cd02068">
    <property type="entry name" value="radical_SAM_B12_BD"/>
    <property type="match status" value="1"/>
</dbReference>
<dbReference type="Gene3D" id="3.40.50.280">
    <property type="entry name" value="Cobalamin-binding domain"/>
    <property type="match status" value="1"/>
</dbReference>
<dbReference type="Gene3D" id="3.80.30.20">
    <property type="entry name" value="tm_1862 like domain"/>
    <property type="match status" value="1"/>
</dbReference>
<dbReference type="InterPro" id="IPR006158">
    <property type="entry name" value="Cobalamin-bd"/>
</dbReference>
<dbReference type="InterPro" id="IPR036724">
    <property type="entry name" value="Cobalamin-bd_sf"/>
</dbReference>
<dbReference type="InterPro" id="IPR006638">
    <property type="entry name" value="Elp3/MiaA/NifB-like_rSAM"/>
</dbReference>
<dbReference type="InterPro" id="IPR034466">
    <property type="entry name" value="Methyltransferase_Class_B"/>
</dbReference>
<dbReference type="InterPro" id="IPR007197">
    <property type="entry name" value="rSAM"/>
</dbReference>
<dbReference type="InterPro" id="IPR023404">
    <property type="entry name" value="rSAM_horseshoe"/>
</dbReference>
<dbReference type="InterPro" id="IPR051198">
    <property type="entry name" value="Tetrapyrrole_Bchl_Biosynth_MTs"/>
</dbReference>
<dbReference type="PANTHER" id="PTHR43409">
    <property type="entry name" value="ANAEROBIC MAGNESIUM-PROTOPORPHYRIN IX MONOMETHYL ESTER CYCLASE-RELATED"/>
    <property type="match status" value="1"/>
</dbReference>
<dbReference type="PANTHER" id="PTHR43409:SF7">
    <property type="entry name" value="BLL1977 PROTEIN"/>
    <property type="match status" value="1"/>
</dbReference>
<dbReference type="Pfam" id="PF02310">
    <property type="entry name" value="B12-binding"/>
    <property type="match status" value="1"/>
</dbReference>
<dbReference type="Pfam" id="PF04055">
    <property type="entry name" value="Radical_SAM"/>
    <property type="match status" value="1"/>
</dbReference>
<dbReference type="SFLD" id="SFLDG01123">
    <property type="entry name" value="methyltransferase_(Class_B)"/>
    <property type="match status" value="1"/>
</dbReference>
<dbReference type="SFLD" id="SFLDS00029">
    <property type="entry name" value="Radical_SAM"/>
    <property type="match status" value="1"/>
</dbReference>
<dbReference type="SMART" id="SM00729">
    <property type="entry name" value="Elp3"/>
    <property type="match status" value="1"/>
</dbReference>
<dbReference type="SUPFAM" id="SSF52242">
    <property type="entry name" value="Cobalamin (vitamin B12)-binding domain"/>
    <property type="match status" value="1"/>
</dbReference>
<dbReference type="SUPFAM" id="SSF102114">
    <property type="entry name" value="Radical SAM enzymes"/>
    <property type="match status" value="1"/>
</dbReference>
<dbReference type="PROSITE" id="PS51332">
    <property type="entry name" value="B12_BINDING"/>
    <property type="match status" value="1"/>
</dbReference>
<dbReference type="PROSITE" id="PS51918">
    <property type="entry name" value="RADICAL_SAM"/>
    <property type="match status" value="1"/>
</dbReference>
<comment type="cofactor">
    <cofactor evidence="4">
        <name>[4Fe-4S] cluster</name>
        <dbReference type="ChEBI" id="CHEBI:49883"/>
    </cofactor>
    <text evidence="4">Binds 1 [4Fe-4S] cluster. The cluster is coordinated with 3 cysteines and an exchangeable S-adenosyl-L-methionine.</text>
</comment>
<comment type="similarity">
    <text evidence="4">Belongs to the methyltransferase superfamily.</text>
</comment>
<evidence type="ECO:0000255" key="1"/>
<evidence type="ECO:0000255" key="2">
    <source>
        <dbReference type="PROSITE-ProRule" id="PRU00666"/>
    </source>
</evidence>
<evidence type="ECO:0000255" key="3">
    <source>
        <dbReference type="PROSITE-ProRule" id="PRU01266"/>
    </source>
</evidence>
<evidence type="ECO:0000305" key="4"/>
<reference key="1">
    <citation type="journal article" date="1998" name="DNA Res.">
        <title>Complete sequence and gene organization of the genome of a hyper-thermophilic archaebacterium, Pyrococcus horikoshii OT3.</title>
        <authorList>
            <person name="Kawarabayasi Y."/>
            <person name="Sawada M."/>
            <person name="Horikawa H."/>
            <person name="Haikawa Y."/>
            <person name="Hino Y."/>
            <person name="Yamamoto S."/>
            <person name="Sekine M."/>
            <person name="Baba S."/>
            <person name="Kosugi H."/>
            <person name="Hosoyama A."/>
            <person name="Nagai Y."/>
            <person name="Sakai M."/>
            <person name="Ogura K."/>
            <person name="Otsuka R."/>
            <person name="Nakazawa H."/>
            <person name="Takamiya M."/>
            <person name="Ohfuku Y."/>
            <person name="Funahashi T."/>
            <person name="Tanaka T."/>
            <person name="Kudoh Y."/>
            <person name="Yamazaki J."/>
            <person name="Kushida N."/>
            <person name="Oguchi A."/>
            <person name="Aoki K."/>
            <person name="Yoshizawa T."/>
            <person name="Nakamura Y."/>
            <person name="Robb F.T."/>
            <person name="Horikoshi K."/>
            <person name="Masuchi Y."/>
            <person name="Shizuya H."/>
            <person name="Kikuchi H."/>
        </authorList>
    </citation>
    <scope>NUCLEOTIDE SEQUENCE [LARGE SCALE GENOMIC DNA]</scope>
    <source>
        <strain>ATCC 700860 / DSM 12428 / JCM 9974 / NBRC 100139 / OT-3</strain>
    </source>
</reference>
<gene>
    <name type="ordered locus">PH0819</name>
</gene>
<proteinExistence type="inferred from homology"/>
<name>Y819_PYRHO</name>